<keyword id="KW-0044">Antibiotic</keyword>
<keyword id="KW-0929">Antimicrobial</keyword>
<keyword id="KW-1015">Disulfide bond</keyword>
<keyword id="KW-0646">Protease inhibitor</keyword>
<keyword id="KW-1185">Reference proteome</keyword>
<keyword id="KW-0964">Secreted</keyword>
<keyword id="KW-0722">Serine protease inhibitor</keyword>
<keyword id="KW-0732">Signal</keyword>
<organism>
    <name type="scientific">Mus musculus</name>
    <name type="common">Mouse</name>
    <dbReference type="NCBI Taxonomy" id="10090"/>
    <lineage>
        <taxon>Eukaryota</taxon>
        <taxon>Metazoa</taxon>
        <taxon>Chordata</taxon>
        <taxon>Craniata</taxon>
        <taxon>Vertebrata</taxon>
        <taxon>Euteleostomi</taxon>
        <taxon>Mammalia</taxon>
        <taxon>Eutheria</taxon>
        <taxon>Euarchontoglires</taxon>
        <taxon>Glires</taxon>
        <taxon>Rodentia</taxon>
        <taxon>Myomorpha</taxon>
        <taxon>Muroidea</taxon>
        <taxon>Muridae</taxon>
        <taxon>Murinae</taxon>
        <taxon>Mus</taxon>
        <taxon>Mus</taxon>
    </lineage>
</organism>
<sequence>MWPNSILVLMTLLISSTLVTGGGVKGEEKRVCPPDYVRCIRQDDPQCYSDNDCGDQEICCFWQCGFKCVLPVKDNSEEQIPQSKV</sequence>
<dbReference type="EMBL" id="AF276975">
    <property type="protein sequence ID" value="AAF86472.1"/>
    <property type="molecule type" value="mRNA"/>
</dbReference>
<dbReference type="EMBL" id="AF482010">
    <property type="protein sequence ID" value="AAL90748.1"/>
    <property type="molecule type" value="Genomic_DNA"/>
</dbReference>
<dbReference type="EMBL" id="BC030939">
    <property type="protein sequence ID" value="AAH30939.1"/>
    <property type="molecule type" value="mRNA"/>
</dbReference>
<dbReference type="CCDS" id="CCDS38318.1"/>
<dbReference type="RefSeq" id="NP_619625.1">
    <property type="nucleotide sequence ID" value="NM_138684.3"/>
</dbReference>
<dbReference type="SMR" id="Q9JHY3"/>
<dbReference type="FunCoup" id="Q9JHY3">
    <property type="interactions" value="1"/>
</dbReference>
<dbReference type="STRING" id="10090.ENSMUSP00000050836"/>
<dbReference type="MEROPS" id="I17.003"/>
<dbReference type="iPTMnet" id="Q9JHY3"/>
<dbReference type="PhosphoSitePlus" id="Q9JHY3"/>
<dbReference type="PaxDb" id="10090-ENSMUSP00000050836"/>
<dbReference type="ProteomicsDB" id="299670"/>
<dbReference type="Antibodypedia" id="53770">
    <property type="antibodies" value="61 antibodies from 17 providers"/>
</dbReference>
<dbReference type="DNASU" id="192200"/>
<dbReference type="Ensembl" id="ENSMUST00000051272.8">
    <property type="protein sequence ID" value="ENSMUSP00000050836.8"/>
    <property type="gene ID" value="ENSMUSG00000042845.8"/>
</dbReference>
<dbReference type="GeneID" id="192200"/>
<dbReference type="KEGG" id="mmu:192200"/>
<dbReference type="UCSC" id="uc008ntx.1">
    <property type="organism name" value="mouse"/>
</dbReference>
<dbReference type="AGR" id="MGI:2183434"/>
<dbReference type="CTD" id="128488"/>
<dbReference type="MGI" id="MGI:2183434">
    <property type="gene designation" value="Wfdc12"/>
</dbReference>
<dbReference type="VEuPathDB" id="HostDB:ENSMUSG00000042845"/>
<dbReference type="GeneTree" id="ENSGT00390000012286"/>
<dbReference type="HOGENOM" id="CLU_172659_0_0_1"/>
<dbReference type="InParanoid" id="Q9JHY3"/>
<dbReference type="OMA" id="CIKSDPP"/>
<dbReference type="OrthoDB" id="4473401at2759"/>
<dbReference type="PhylomeDB" id="Q9JHY3"/>
<dbReference type="BioGRID-ORCS" id="192200">
    <property type="hits" value="2 hits in 76 CRISPR screens"/>
</dbReference>
<dbReference type="ChiTaRS" id="Wfdc12">
    <property type="organism name" value="mouse"/>
</dbReference>
<dbReference type="PRO" id="PR:Q9JHY3"/>
<dbReference type="Proteomes" id="UP000000589">
    <property type="component" value="Chromosome 2"/>
</dbReference>
<dbReference type="RNAct" id="Q9JHY3">
    <property type="molecule type" value="protein"/>
</dbReference>
<dbReference type="Bgee" id="ENSMUSG00000042845">
    <property type="expression patterns" value="Expressed in parotid gland and 48 other cell types or tissues"/>
</dbReference>
<dbReference type="ExpressionAtlas" id="Q9JHY3">
    <property type="expression patterns" value="baseline and differential"/>
</dbReference>
<dbReference type="GO" id="GO:0005576">
    <property type="term" value="C:extracellular region"/>
    <property type="evidence" value="ECO:0007669"/>
    <property type="project" value="UniProtKB-SubCell"/>
</dbReference>
<dbReference type="GO" id="GO:0004867">
    <property type="term" value="F:serine-type endopeptidase inhibitor activity"/>
    <property type="evidence" value="ECO:0007669"/>
    <property type="project" value="UniProtKB-KW"/>
</dbReference>
<dbReference type="GO" id="GO:0042742">
    <property type="term" value="P:defense response to bacterium"/>
    <property type="evidence" value="ECO:0000314"/>
    <property type="project" value="UniProtKB"/>
</dbReference>
<dbReference type="FunFam" id="4.10.75.10:FF:000005">
    <property type="entry name" value="WAP four-disulfide core domain protein 12"/>
    <property type="match status" value="1"/>
</dbReference>
<dbReference type="Gene3D" id="4.10.75.10">
    <property type="entry name" value="Elafin-like"/>
    <property type="match status" value="1"/>
</dbReference>
<dbReference type="InterPro" id="IPR036645">
    <property type="entry name" value="Elafin-like_sf"/>
</dbReference>
<dbReference type="InterPro" id="IPR008197">
    <property type="entry name" value="WAP_dom"/>
</dbReference>
<dbReference type="Pfam" id="PF00095">
    <property type="entry name" value="WAP"/>
    <property type="match status" value="1"/>
</dbReference>
<dbReference type="SUPFAM" id="SSF57256">
    <property type="entry name" value="Elafin-like"/>
    <property type="match status" value="1"/>
</dbReference>
<dbReference type="PROSITE" id="PS51390">
    <property type="entry name" value="WAP"/>
    <property type="match status" value="1"/>
</dbReference>
<comment type="function">
    <text evidence="2 5">Antibacterial protein which inhibits the growth of E.coli and S.aureus. Putative acid-stable proteinase inhibitor.</text>
</comment>
<comment type="subcellular location">
    <subcellularLocation>
        <location evidence="6">Secreted</location>
    </subcellularLocation>
</comment>
<comment type="tissue specificity">
    <text evidence="5">Constitutively expressed in tongue.</text>
</comment>
<feature type="signal peptide" evidence="3">
    <location>
        <begin position="1"/>
        <end position="21"/>
    </location>
</feature>
<feature type="chain" id="PRO_0000041391" description="WAP four-disulfide core domain protein 12" evidence="3">
    <location>
        <begin position="22"/>
        <end position="85"/>
    </location>
</feature>
<feature type="domain" description="WAP" evidence="4">
    <location>
        <begin position="25"/>
        <end position="72"/>
    </location>
</feature>
<feature type="disulfide bond" evidence="1 4">
    <location>
        <begin position="32"/>
        <end position="60"/>
    </location>
</feature>
<feature type="disulfide bond" evidence="1 4">
    <location>
        <begin position="39"/>
        <end position="64"/>
    </location>
</feature>
<feature type="disulfide bond" evidence="1 4">
    <location>
        <begin position="47"/>
        <end position="59"/>
    </location>
</feature>
<feature type="disulfide bond" evidence="1 4">
    <location>
        <begin position="53"/>
        <end position="68"/>
    </location>
</feature>
<protein>
    <recommendedName>
        <fullName>WAP four-disulfide core domain protein 12</fullName>
    </recommendedName>
    <alternativeName>
        <fullName>Elafin-like protein II</fullName>
    </alternativeName>
    <alternativeName>
        <fullName>Single WAP motif protein 2</fullName>
    </alternativeName>
    <alternativeName>
        <fullName>Whey acidic protein 2</fullName>
    </alternativeName>
</protein>
<evidence type="ECO:0000250" key="1">
    <source>
        <dbReference type="UniProtKB" id="P19957"/>
    </source>
</evidence>
<evidence type="ECO:0000250" key="2">
    <source>
        <dbReference type="UniProtKB" id="Q8WWY7"/>
    </source>
</evidence>
<evidence type="ECO:0000255" key="3"/>
<evidence type="ECO:0000255" key="4">
    <source>
        <dbReference type="PROSITE-ProRule" id="PRU00722"/>
    </source>
</evidence>
<evidence type="ECO:0000269" key="5">
    <source>
    </source>
</evidence>
<evidence type="ECO:0000305" key="6"/>
<evidence type="ECO:0000312" key="7">
    <source>
        <dbReference type="EMBL" id="AAF86472.1"/>
    </source>
</evidence>
<evidence type="ECO:0000312" key="8">
    <source>
        <dbReference type="EMBL" id="AAH30939.1"/>
    </source>
</evidence>
<evidence type="ECO:0000312" key="9">
    <source>
        <dbReference type="EMBL" id="AAL90748.1"/>
    </source>
</evidence>
<evidence type="ECO:0000312" key="10">
    <source>
        <dbReference type="MGI" id="MGI:2183434"/>
    </source>
</evidence>
<name>WFD12_MOUSE</name>
<proteinExistence type="evidence at transcript level"/>
<gene>
    <name evidence="10" type="primary">Wfdc12</name>
    <name evidence="10" type="synonym">Swam2</name>
</gene>
<accession>Q9JHY3</accession>
<reference evidence="6 7" key="1">
    <citation type="journal article" date="2003" name="J. Immunol.">
        <title>Mouse SWAM1 and SWAM2 are antibacterial proteins composed of a single whey acidic protein motif.</title>
        <authorList>
            <person name="Hagiwara K."/>
            <person name="Kikuchi T."/>
            <person name="Endo Y."/>
            <person name="Huqun X."/>
            <person name="Usui K."/>
            <person name="Takahashi M."/>
            <person name="Shibata N."/>
            <person name="Kusakabe T."/>
            <person name="Xin H."/>
            <person name="Hoshi S."/>
            <person name="Miki M."/>
            <person name="Inooka N."/>
            <person name="Tokue Y."/>
            <person name="Nukiwa T."/>
        </authorList>
    </citation>
    <scope>NUCLEOTIDE SEQUENCE [GENOMIC DNA / MRNA]</scope>
    <scope>FUNCTION</scope>
    <scope>TISSUE SPECIFICITY</scope>
    <source>
        <strain evidence="7">129/SvJ</strain>
    </source>
</reference>
<reference evidence="9" key="2">
    <citation type="journal article" date="2004" name="Genome Res.">
        <title>The status, quality, and expansion of the NIH full-length cDNA project: the Mammalian Gene Collection (MGC).</title>
        <authorList>
            <consortium name="The MGC Project Team"/>
        </authorList>
    </citation>
    <scope>NUCLEOTIDE SEQUENCE [LARGE SCALE MRNA]</scope>
    <source>
        <tissue evidence="8">Salivary gland</tissue>
    </source>
</reference>